<keyword id="KW-0050">Antiport</keyword>
<keyword id="KW-0997">Cell inner membrane</keyword>
<keyword id="KW-1003">Cell membrane</keyword>
<keyword id="KW-0406">Ion transport</keyword>
<keyword id="KW-0472">Membrane</keyword>
<keyword id="KW-1185">Reference proteome</keyword>
<keyword id="KW-0915">Sodium</keyword>
<keyword id="KW-0739">Sodium transport</keyword>
<keyword id="KW-0812">Transmembrane</keyword>
<keyword id="KW-1133">Transmembrane helix</keyword>
<keyword id="KW-0813">Transport</keyword>
<reference key="1">
    <citation type="journal article" date="2007" name="J. Bacteriol.">
        <title>The genome sequence of avian pathogenic Escherichia coli strain O1:K1:H7 shares strong similarities with human extraintestinal pathogenic E. coli genomes.</title>
        <authorList>
            <person name="Johnson T.J."/>
            <person name="Kariyawasam S."/>
            <person name="Wannemuehler Y."/>
            <person name="Mangiamele P."/>
            <person name="Johnson S.J."/>
            <person name="Doetkott C."/>
            <person name="Skyberg J.A."/>
            <person name="Lynne A.M."/>
            <person name="Johnson J.R."/>
            <person name="Nolan L.K."/>
        </authorList>
    </citation>
    <scope>NUCLEOTIDE SEQUENCE [LARGE SCALE GENOMIC DNA]</scope>
</reference>
<feature type="chain" id="PRO_0000334287" description="Na(+)/H(+) antiporter NhaA">
    <location>
        <begin position="1"/>
        <end position="388"/>
    </location>
</feature>
<feature type="topological domain" description="Cytoplasmic" evidence="1">
    <location>
        <begin position="1"/>
        <end position="11"/>
    </location>
</feature>
<feature type="transmembrane region" description="Helical; Name=1" evidence="1">
    <location>
        <begin position="12"/>
        <end position="31"/>
    </location>
</feature>
<feature type="topological domain" description="Periplasmic" evidence="1">
    <location>
        <begin position="32"/>
        <end position="58"/>
    </location>
</feature>
<feature type="transmembrane region" description="Helical; Name=2" evidence="1">
    <location>
        <begin position="59"/>
        <end position="80"/>
    </location>
</feature>
<feature type="topological domain" description="Cytoplasmic" evidence="1">
    <location>
        <begin position="81"/>
        <end position="96"/>
    </location>
</feature>
<feature type="transmembrane region" description="Helical; Name=3" evidence="1">
    <location>
        <begin position="97"/>
        <end position="116"/>
    </location>
</feature>
<feature type="topological domain" description="Periplasmic" evidence="1">
    <location>
        <begin position="117"/>
        <end position="122"/>
    </location>
</feature>
<feature type="transmembrane region" description="Helical; Name=4" evidence="1">
    <location>
        <begin position="123"/>
        <end position="130"/>
    </location>
</feature>
<feature type="topological domain" description="Cytoplasmic" evidence="1">
    <location>
        <begin position="131"/>
        <end position="154"/>
    </location>
</feature>
<feature type="transmembrane region" description="Helical; Name=5" evidence="1">
    <location>
        <begin position="155"/>
        <end position="176"/>
    </location>
</feature>
<feature type="topological domain" description="Periplasmic" evidence="1">
    <location>
        <begin position="177"/>
        <end position="180"/>
    </location>
</feature>
<feature type="transmembrane region" description="Helical; Name=6" evidence="1">
    <location>
        <begin position="181"/>
        <end position="200"/>
    </location>
</feature>
<feature type="topological domain" description="Cytoplasmic" evidence="1">
    <location>
        <begin position="201"/>
        <end position="204"/>
    </location>
</feature>
<feature type="transmembrane region" description="Helical; Name=7" evidence="1">
    <location>
        <begin position="205"/>
        <end position="222"/>
    </location>
</feature>
<feature type="topological domain" description="Periplasmic" evidence="1">
    <location>
        <position position="223"/>
    </location>
</feature>
<feature type="transmembrane region" description="Helical; Name=8" evidence="1">
    <location>
        <begin position="224"/>
        <end position="236"/>
    </location>
</feature>
<feature type="topological domain" description="Cytoplasmic" evidence="1">
    <location>
        <begin position="237"/>
        <end position="253"/>
    </location>
</feature>
<feature type="transmembrane region" description="Helical; Name=9" evidence="1">
    <location>
        <begin position="254"/>
        <end position="272"/>
    </location>
</feature>
<feature type="topological domain" description="Periplasmic" evidence="1">
    <location>
        <begin position="273"/>
        <end position="286"/>
    </location>
</feature>
<feature type="transmembrane region" description="Helical; Name=10" evidence="1">
    <location>
        <begin position="287"/>
        <end position="310"/>
    </location>
</feature>
<feature type="topological domain" description="Cytoplasmic" evidence="1">
    <location>
        <begin position="311"/>
        <end position="339"/>
    </location>
</feature>
<feature type="transmembrane region" description="Helical; Name=11" evidence="1">
    <location>
        <begin position="340"/>
        <end position="350"/>
    </location>
</feature>
<feature type="topological domain" description="Periplasmic" evidence="1">
    <location>
        <begin position="351"/>
        <end position="357"/>
    </location>
</feature>
<feature type="transmembrane region" description="Helical; Name=12" evidence="1">
    <location>
        <begin position="358"/>
        <end position="380"/>
    </location>
</feature>
<feature type="topological domain" description="Cytoplasmic" evidence="1">
    <location>
        <begin position="381"/>
        <end position="388"/>
    </location>
</feature>
<dbReference type="EMBL" id="CP000468">
    <property type="protein sequence ID" value="ABI99510.1"/>
    <property type="molecule type" value="Genomic_DNA"/>
</dbReference>
<dbReference type="RefSeq" id="WP_000681386.1">
    <property type="nucleotide sequence ID" value="NZ_CADILS010000013.1"/>
</dbReference>
<dbReference type="SMR" id="A1A771"/>
<dbReference type="KEGG" id="ecv:APECO1_1960"/>
<dbReference type="HOGENOM" id="CLU_015803_1_0_6"/>
<dbReference type="Proteomes" id="UP000008216">
    <property type="component" value="Chromosome"/>
</dbReference>
<dbReference type="GO" id="GO:0005886">
    <property type="term" value="C:plasma membrane"/>
    <property type="evidence" value="ECO:0007669"/>
    <property type="project" value="UniProtKB-SubCell"/>
</dbReference>
<dbReference type="GO" id="GO:0015385">
    <property type="term" value="F:sodium:proton antiporter activity"/>
    <property type="evidence" value="ECO:0007669"/>
    <property type="project" value="TreeGrafter"/>
</dbReference>
<dbReference type="GO" id="GO:0006885">
    <property type="term" value="P:regulation of pH"/>
    <property type="evidence" value="ECO:0007669"/>
    <property type="project" value="InterPro"/>
</dbReference>
<dbReference type="FunFam" id="1.20.1530.10:FF:000001">
    <property type="entry name" value="Na(+)/H(+) antiporter NhaA"/>
    <property type="match status" value="1"/>
</dbReference>
<dbReference type="Gene3D" id="1.20.1530.10">
    <property type="entry name" value="Na+/H+ antiporter like domain"/>
    <property type="match status" value="1"/>
</dbReference>
<dbReference type="HAMAP" id="MF_01844">
    <property type="entry name" value="NhaA"/>
    <property type="match status" value="1"/>
</dbReference>
<dbReference type="InterPro" id="IPR023171">
    <property type="entry name" value="Na/H_antiporter_dom_sf"/>
</dbReference>
<dbReference type="InterPro" id="IPR004670">
    <property type="entry name" value="NhaA"/>
</dbReference>
<dbReference type="NCBIfam" id="TIGR00773">
    <property type="entry name" value="NhaA"/>
    <property type="match status" value="1"/>
</dbReference>
<dbReference type="NCBIfam" id="NF007111">
    <property type="entry name" value="PRK09560.1"/>
    <property type="match status" value="1"/>
</dbReference>
<dbReference type="NCBIfam" id="NF007112">
    <property type="entry name" value="PRK09561.1"/>
    <property type="match status" value="1"/>
</dbReference>
<dbReference type="PANTHER" id="PTHR30341:SF0">
    <property type="entry name" value="NA(+)_H(+) ANTIPORTER NHAA"/>
    <property type="match status" value="1"/>
</dbReference>
<dbReference type="PANTHER" id="PTHR30341">
    <property type="entry name" value="SODIUM ION/PROTON ANTIPORTER NHAA-RELATED"/>
    <property type="match status" value="1"/>
</dbReference>
<dbReference type="Pfam" id="PF06965">
    <property type="entry name" value="Na_H_antiport_1"/>
    <property type="match status" value="1"/>
</dbReference>
<accession>A1A771</accession>
<organism>
    <name type="scientific">Escherichia coli O1:K1 / APEC</name>
    <dbReference type="NCBI Taxonomy" id="405955"/>
    <lineage>
        <taxon>Bacteria</taxon>
        <taxon>Pseudomonadati</taxon>
        <taxon>Pseudomonadota</taxon>
        <taxon>Gammaproteobacteria</taxon>
        <taxon>Enterobacterales</taxon>
        <taxon>Enterobacteriaceae</taxon>
        <taxon>Escherichia</taxon>
    </lineage>
</organism>
<proteinExistence type="inferred from homology"/>
<sequence length="388" mass="41398">MKHLHRFFSSDASGGIILIIAAVLAMIMANSGATSGWYHDFLETPVQLRVGTLEINKNMLLWINDALMAVFFLLVGLEVKRELMQGSLASLRQAAFPVIAAIGGMIVPALLYLAFNYADPITREGWAIPAATDIAFALGVLALLGSRVPLALKIFLMALAIIDDLGAIIIIALFYTNDLSMASLGVAAVAIAVLVVLNLCGVRRTGVYILVGVVLWTAVLKSGVHATLAGVIVGFFIPLKEKHGRSPAKRLEHVLHPWVAYLILPLFAFANAGVSLQGVTLEGLTSILPLGIIAGLLIGKPLGISLFCWLALRLKLAHLPEGTTYQQIMAVGILCGIGFTMSIFIASLAFGSVDPELINWAKLGILVGSISSAVIGYSWLRVRLRPSV</sequence>
<gene>
    <name evidence="1" type="primary">nhaA</name>
    <name type="ordered locus">Ecok1_00170</name>
    <name type="ORF">APECO1_1960</name>
</gene>
<name>NHAA_ECOK1</name>
<protein>
    <recommendedName>
        <fullName evidence="1">Na(+)/H(+) antiporter NhaA</fullName>
    </recommendedName>
    <alternativeName>
        <fullName evidence="1">Sodium/proton antiporter NhaA</fullName>
    </alternativeName>
</protein>
<comment type="function">
    <text evidence="1">Na(+)/H(+) antiporter that extrudes sodium in exchange for external protons.</text>
</comment>
<comment type="catalytic activity">
    <reaction evidence="1">
        <text>Na(+)(in) + 2 H(+)(out) = Na(+)(out) + 2 H(+)(in)</text>
        <dbReference type="Rhea" id="RHEA:29251"/>
        <dbReference type="ChEBI" id="CHEBI:15378"/>
        <dbReference type="ChEBI" id="CHEBI:29101"/>
    </reaction>
    <physiologicalReaction direction="left-to-right" evidence="1">
        <dbReference type="Rhea" id="RHEA:29252"/>
    </physiologicalReaction>
</comment>
<comment type="subcellular location">
    <subcellularLocation>
        <location evidence="1">Cell inner membrane</location>
        <topology evidence="1">Multi-pass membrane protein</topology>
    </subcellularLocation>
</comment>
<comment type="similarity">
    <text evidence="1">Belongs to the NhaA Na(+)/H(+) (TC 2.A.33) antiporter family.</text>
</comment>
<evidence type="ECO:0000255" key="1">
    <source>
        <dbReference type="HAMAP-Rule" id="MF_01844"/>
    </source>
</evidence>